<gene>
    <name type="primary">mrpl4</name>
    <name type="ORF">ATEG_01463</name>
</gene>
<keyword id="KW-0496">Mitochondrion</keyword>
<keyword id="KW-1185">Reference proteome</keyword>
<keyword id="KW-0687">Ribonucleoprotein</keyword>
<keyword id="KW-0689">Ribosomal protein</keyword>
<keyword id="KW-0809">Transit peptide</keyword>
<proteinExistence type="inferred from homology"/>
<name>RM04_ASPTN</name>
<accession>Q0CXX1</accession>
<organism>
    <name type="scientific">Aspergillus terreus (strain NIH 2624 / FGSC A1156)</name>
    <dbReference type="NCBI Taxonomy" id="341663"/>
    <lineage>
        <taxon>Eukaryota</taxon>
        <taxon>Fungi</taxon>
        <taxon>Dikarya</taxon>
        <taxon>Ascomycota</taxon>
        <taxon>Pezizomycotina</taxon>
        <taxon>Eurotiomycetes</taxon>
        <taxon>Eurotiomycetidae</taxon>
        <taxon>Eurotiales</taxon>
        <taxon>Aspergillaceae</taxon>
        <taxon>Aspergillus</taxon>
        <taxon>Aspergillus subgen. Circumdati</taxon>
    </lineage>
</organism>
<protein>
    <recommendedName>
        <fullName evidence="3">Large ribosomal subunit protein uL29m</fullName>
    </recommendedName>
    <alternativeName>
        <fullName>54S ribosomal protein L4, mitochondrial</fullName>
    </alternativeName>
</protein>
<feature type="transit peptide" description="Mitochondrion" evidence="2">
    <location>
        <begin position="1"/>
        <end status="unknown"/>
    </location>
</feature>
<feature type="chain" id="PRO_0000372394" description="Large ribosomal subunit protein uL29m">
    <location>
        <begin status="unknown"/>
        <end position="214"/>
    </location>
</feature>
<comment type="subunit">
    <text evidence="1">Component of the mitochondrial large ribosomal subunit. Mature mitochondrial ribosomes consist of a small (37S) and a large (54S) subunit. The 37S subunit contains at least 33 different proteins and 1 molecule of RNA (15S). The 54S subunit contains at least 45 different proteins and 1 molecule of RNA (21S) (By similarity).</text>
</comment>
<comment type="subcellular location">
    <subcellularLocation>
        <location evidence="1">Mitochondrion</location>
    </subcellularLocation>
</comment>
<comment type="similarity">
    <text evidence="3">Belongs to the universal ribosomal protein uL29 family.</text>
</comment>
<reference key="1">
    <citation type="submission" date="2005-09" db="EMBL/GenBank/DDBJ databases">
        <title>Annotation of the Aspergillus terreus NIH2624 genome.</title>
        <authorList>
            <person name="Birren B.W."/>
            <person name="Lander E.S."/>
            <person name="Galagan J.E."/>
            <person name="Nusbaum C."/>
            <person name="Devon K."/>
            <person name="Henn M."/>
            <person name="Ma L.-J."/>
            <person name="Jaffe D.B."/>
            <person name="Butler J."/>
            <person name="Alvarez P."/>
            <person name="Gnerre S."/>
            <person name="Grabherr M."/>
            <person name="Kleber M."/>
            <person name="Mauceli E.W."/>
            <person name="Brockman W."/>
            <person name="Rounsley S."/>
            <person name="Young S.K."/>
            <person name="LaButti K."/>
            <person name="Pushparaj V."/>
            <person name="DeCaprio D."/>
            <person name="Crawford M."/>
            <person name="Koehrsen M."/>
            <person name="Engels R."/>
            <person name="Montgomery P."/>
            <person name="Pearson M."/>
            <person name="Howarth C."/>
            <person name="Larson L."/>
            <person name="Luoma S."/>
            <person name="White J."/>
            <person name="Alvarado L."/>
            <person name="Kodira C.D."/>
            <person name="Zeng Q."/>
            <person name="Oleary S."/>
            <person name="Yandava C."/>
            <person name="Denning D.W."/>
            <person name="Nierman W.C."/>
            <person name="Milne T."/>
            <person name="Madden K."/>
        </authorList>
    </citation>
    <scope>NUCLEOTIDE SEQUENCE [LARGE SCALE GENOMIC DNA]</scope>
    <source>
        <strain>NIH 2624 / FGSC A1156</strain>
    </source>
</reference>
<sequence length="214" mass="24681">MHRHSVLRLARQAGGLPLVELPPPYLAPSLHFSLIRSPVQSSNFSSTTPVAGHGRDLSKSRGVSAIHRTGPKFKLGVSKYPLPKPVSPEALEKRNPTPDHGLWGFFPKDRQALSTPEYDHAHGRSWSIQELREKSWEDLHALWWVCVKERNRIATSNLERERLKAGYGEYESSERDRVIRVTQNGIKHVLRERWYAWEDAQKLYKDGYRPQDEE</sequence>
<dbReference type="EMBL" id="CH476595">
    <property type="protein sequence ID" value="EAU38220.1"/>
    <property type="molecule type" value="Genomic_DNA"/>
</dbReference>
<dbReference type="RefSeq" id="XP_001208828.1">
    <property type="nucleotide sequence ID" value="XM_001208828.1"/>
</dbReference>
<dbReference type="SMR" id="Q0CXX1"/>
<dbReference type="STRING" id="341663.Q0CXX1"/>
<dbReference type="EnsemblFungi" id="EAU38220">
    <property type="protein sequence ID" value="EAU38220"/>
    <property type="gene ID" value="ATEG_01463"/>
</dbReference>
<dbReference type="GeneID" id="4315829"/>
<dbReference type="VEuPathDB" id="FungiDB:ATEG_01463"/>
<dbReference type="eggNOG" id="KOG3331">
    <property type="taxonomic scope" value="Eukaryota"/>
</dbReference>
<dbReference type="HOGENOM" id="CLU_063281_0_0_1"/>
<dbReference type="OMA" id="YAHGRAW"/>
<dbReference type="OrthoDB" id="270763at2759"/>
<dbReference type="Proteomes" id="UP000007963">
    <property type="component" value="Unassembled WGS sequence"/>
</dbReference>
<dbReference type="GO" id="GO:0005762">
    <property type="term" value="C:mitochondrial large ribosomal subunit"/>
    <property type="evidence" value="ECO:0007669"/>
    <property type="project" value="TreeGrafter"/>
</dbReference>
<dbReference type="GO" id="GO:0003735">
    <property type="term" value="F:structural constituent of ribosome"/>
    <property type="evidence" value="ECO:0007669"/>
    <property type="project" value="InterPro"/>
</dbReference>
<dbReference type="GO" id="GO:0032543">
    <property type="term" value="P:mitochondrial translation"/>
    <property type="evidence" value="ECO:0007669"/>
    <property type="project" value="TreeGrafter"/>
</dbReference>
<dbReference type="Gene3D" id="6.10.330.20">
    <property type="match status" value="1"/>
</dbReference>
<dbReference type="InterPro" id="IPR038340">
    <property type="entry name" value="MRP-L47_sf"/>
</dbReference>
<dbReference type="InterPro" id="IPR010729">
    <property type="entry name" value="Ribosomal_uL29_mit"/>
</dbReference>
<dbReference type="PANTHER" id="PTHR21183:SF18">
    <property type="entry name" value="LARGE RIBOSOMAL SUBUNIT PROTEIN UL29M"/>
    <property type="match status" value="1"/>
</dbReference>
<dbReference type="PANTHER" id="PTHR21183">
    <property type="entry name" value="RIBOSOMAL PROTEIN L47, MITOCHONDRIAL-RELATED"/>
    <property type="match status" value="1"/>
</dbReference>
<dbReference type="Pfam" id="PF06984">
    <property type="entry name" value="MRP-L47"/>
    <property type="match status" value="1"/>
</dbReference>
<evidence type="ECO:0000250" key="1"/>
<evidence type="ECO:0000255" key="2"/>
<evidence type="ECO:0000305" key="3"/>